<feature type="chain" id="PRO_1000120730" description="Small ribosomal subunit protein bS6">
    <location>
        <begin position="1"/>
        <end position="95"/>
    </location>
</feature>
<gene>
    <name evidence="1" type="primary">rpsF</name>
    <name type="ordered locus">cu1987</name>
</gene>
<keyword id="KW-1185">Reference proteome</keyword>
<keyword id="KW-0687">Ribonucleoprotein</keyword>
<keyword id="KW-0689">Ribosomal protein</keyword>
<keyword id="KW-0694">RNA-binding</keyword>
<keyword id="KW-0699">rRNA-binding</keyword>
<protein>
    <recommendedName>
        <fullName evidence="1">Small ribosomal subunit protein bS6</fullName>
    </recommendedName>
    <alternativeName>
        <fullName evidence="2">30S ribosomal protein S6</fullName>
    </alternativeName>
</protein>
<reference key="1">
    <citation type="journal article" date="2008" name="J. Biotechnol.">
        <title>The lifestyle of Corynebacterium urealyticum derived from its complete genome sequence established by pyrosequencing.</title>
        <authorList>
            <person name="Tauch A."/>
            <person name="Trost E."/>
            <person name="Tilker A."/>
            <person name="Ludewig U."/>
            <person name="Schneiker S."/>
            <person name="Goesmann A."/>
            <person name="Arnold W."/>
            <person name="Bekel T."/>
            <person name="Brinkrolf K."/>
            <person name="Brune I."/>
            <person name="Goetker S."/>
            <person name="Kalinowski J."/>
            <person name="Kamp P.-B."/>
            <person name="Lobo F.P."/>
            <person name="Viehoever P."/>
            <person name="Weisshaar B."/>
            <person name="Soriano F."/>
            <person name="Droege M."/>
            <person name="Puehler A."/>
        </authorList>
    </citation>
    <scope>NUCLEOTIDE SEQUENCE [LARGE SCALE GENOMIC DNA]</scope>
    <source>
        <strain>ATCC 43042 / DSM 7109</strain>
    </source>
</reference>
<name>RS6_CORU7</name>
<evidence type="ECO:0000255" key="1">
    <source>
        <dbReference type="HAMAP-Rule" id="MF_00360"/>
    </source>
</evidence>
<evidence type="ECO:0000305" key="2"/>
<dbReference type="EMBL" id="AM942444">
    <property type="protein sequence ID" value="CAQ05944.1"/>
    <property type="molecule type" value="Genomic_DNA"/>
</dbReference>
<dbReference type="RefSeq" id="WP_012361211.1">
    <property type="nucleotide sequence ID" value="NC_010545.1"/>
</dbReference>
<dbReference type="SMR" id="B1VIZ8"/>
<dbReference type="STRING" id="504474.cu1987"/>
<dbReference type="GeneID" id="60604764"/>
<dbReference type="KEGG" id="cur:cu1987"/>
<dbReference type="eggNOG" id="COG0360">
    <property type="taxonomic scope" value="Bacteria"/>
</dbReference>
<dbReference type="HOGENOM" id="CLU_113441_5_3_11"/>
<dbReference type="Proteomes" id="UP000001727">
    <property type="component" value="Chromosome"/>
</dbReference>
<dbReference type="GO" id="GO:0005737">
    <property type="term" value="C:cytoplasm"/>
    <property type="evidence" value="ECO:0007669"/>
    <property type="project" value="UniProtKB-ARBA"/>
</dbReference>
<dbReference type="GO" id="GO:1990904">
    <property type="term" value="C:ribonucleoprotein complex"/>
    <property type="evidence" value="ECO:0007669"/>
    <property type="project" value="UniProtKB-KW"/>
</dbReference>
<dbReference type="GO" id="GO:0005840">
    <property type="term" value="C:ribosome"/>
    <property type="evidence" value="ECO:0007669"/>
    <property type="project" value="UniProtKB-KW"/>
</dbReference>
<dbReference type="GO" id="GO:0070181">
    <property type="term" value="F:small ribosomal subunit rRNA binding"/>
    <property type="evidence" value="ECO:0007669"/>
    <property type="project" value="TreeGrafter"/>
</dbReference>
<dbReference type="GO" id="GO:0003735">
    <property type="term" value="F:structural constituent of ribosome"/>
    <property type="evidence" value="ECO:0007669"/>
    <property type="project" value="InterPro"/>
</dbReference>
<dbReference type="GO" id="GO:0006412">
    <property type="term" value="P:translation"/>
    <property type="evidence" value="ECO:0007669"/>
    <property type="project" value="UniProtKB-UniRule"/>
</dbReference>
<dbReference type="CDD" id="cd00473">
    <property type="entry name" value="bS6"/>
    <property type="match status" value="1"/>
</dbReference>
<dbReference type="FunFam" id="3.30.70.60:FF:000002">
    <property type="entry name" value="30S ribosomal protein S6"/>
    <property type="match status" value="1"/>
</dbReference>
<dbReference type="Gene3D" id="3.30.70.60">
    <property type="match status" value="1"/>
</dbReference>
<dbReference type="HAMAP" id="MF_00360">
    <property type="entry name" value="Ribosomal_bS6"/>
    <property type="match status" value="1"/>
</dbReference>
<dbReference type="InterPro" id="IPR000529">
    <property type="entry name" value="Ribosomal_bS6"/>
</dbReference>
<dbReference type="InterPro" id="IPR035980">
    <property type="entry name" value="Ribosomal_bS6_sf"/>
</dbReference>
<dbReference type="InterPro" id="IPR020814">
    <property type="entry name" value="Ribosomal_S6_plastid/chlpt"/>
</dbReference>
<dbReference type="InterPro" id="IPR014717">
    <property type="entry name" value="Transl_elong_EF1B/ribsomal_bS6"/>
</dbReference>
<dbReference type="NCBIfam" id="TIGR00166">
    <property type="entry name" value="S6"/>
    <property type="match status" value="1"/>
</dbReference>
<dbReference type="PANTHER" id="PTHR21011">
    <property type="entry name" value="MITOCHONDRIAL 28S RIBOSOMAL PROTEIN S6"/>
    <property type="match status" value="1"/>
</dbReference>
<dbReference type="PANTHER" id="PTHR21011:SF1">
    <property type="entry name" value="SMALL RIBOSOMAL SUBUNIT PROTEIN BS6M"/>
    <property type="match status" value="1"/>
</dbReference>
<dbReference type="Pfam" id="PF01250">
    <property type="entry name" value="Ribosomal_S6"/>
    <property type="match status" value="1"/>
</dbReference>
<dbReference type="SUPFAM" id="SSF54995">
    <property type="entry name" value="Ribosomal protein S6"/>
    <property type="match status" value="1"/>
</dbReference>
<proteinExistence type="inferred from homology"/>
<organism>
    <name type="scientific">Corynebacterium urealyticum (strain ATCC 43042 / DSM 7109)</name>
    <dbReference type="NCBI Taxonomy" id="504474"/>
    <lineage>
        <taxon>Bacteria</taxon>
        <taxon>Bacillati</taxon>
        <taxon>Actinomycetota</taxon>
        <taxon>Actinomycetes</taxon>
        <taxon>Mycobacteriales</taxon>
        <taxon>Corynebacteriaceae</taxon>
        <taxon>Corynebacterium</taxon>
    </lineage>
</organism>
<accession>B1VIZ8</accession>
<sequence length="95" mass="11242">MRQYEVMIIVDPSQDERTVAPSLDKYLNIVREEKGSVDKVDVWGKRRFEYPIQKKEEGVYIVLDLTCESDTVRELDRVLNLNDNVLRTKVLRKDK</sequence>
<comment type="function">
    <text evidence="1">Binds together with bS18 to 16S ribosomal RNA.</text>
</comment>
<comment type="similarity">
    <text evidence="1">Belongs to the bacterial ribosomal protein bS6 family.</text>
</comment>